<gene>
    <name evidence="1" type="primary">lolB</name>
    <name type="ordered locus">VS_0750</name>
</gene>
<evidence type="ECO:0000255" key="1">
    <source>
        <dbReference type="HAMAP-Rule" id="MF_00233"/>
    </source>
</evidence>
<proteinExistence type="inferred from homology"/>
<dbReference type="EMBL" id="FM954972">
    <property type="protein sequence ID" value="CAV17728.1"/>
    <property type="molecule type" value="Genomic_DNA"/>
</dbReference>
<dbReference type="SMR" id="B7VKH1"/>
<dbReference type="STRING" id="575788.VS_0750"/>
<dbReference type="KEGG" id="vsp:VS_0750"/>
<dbReference type="PATRIC" id="fig|575788.5.peg.2079"/>
<dbReference type="eggNOG" id="COG3017">
    <property type="taxonomic scope" value="Bacteria"/>
</dbReference>
<dbReference type="HOGENOM" id="CLU_092816_1_0_6"/>
<dbReference type="Proteomes" id="UP000009100">
    <property type="component" value="Chromosome 1"/>
</dbReference>
<dbReference type="GO" id="GO:0009279">
    <property type="term" value="C:cell outer membrane"/>
    <property type="evidence" value="ECO:0007669"/>
    <property type="project" value="UniProtKB-SubCell"/>
</dbReference>
<dbReference type="GO" id="GO:0044874">
    <property type="term" value="P:lipoprotein localization to outer membrane"/>
    <property type="evidence" value="ECO:0007669"/>
    <property type="project" value="UniProtKB-UniRule"/>
</dbReference>
<dbReference type="GO" id="GO:0015031">
    <property type="term" value="P:protein transport"/>
    <property type="evidence" value="ECO:0007669"/>
    <property type="project" value="UniProtKB-KW"/>
</dbReference>
<dbReference type="CDD" id="cd16326">
    <property type="entry name" value="LolB"/>
    <property type="match status" value="1"/>
</dbReference>
<dbReference type="Gene3D" id="2.50.20.10">
    <property type="entry name" value="Lipoprotein localisation LolA/LolB/LppX"/>
    <property type="match status" value="1"/>
</dbReference>
<dbReference type="HAMAP" id="MF_00233">
    <property type="entry name" value="LolB"/>
    <property type="match status" value="1"/>
</dbReference>
<dbReference type="InterPro" id="IPR029046">
    <property type="entry name" value="LolA/LolB/LppX"/>
</dbReference>
<dbReference type="InterPro" id="IPR004565">
    <property type="entry name" value="OM_lipoprot_LolB"/>
</dbReference>
<dbReference type="NCBIfam" id="TIGR00548">
    <property type="entry name" value="lolB"/>
    <property type="match status" value="1"/>
</dbReference>
<dbReference type="Pfam" id="PF03550">
    <property type="entry name" value="LolB"/>
    <property type="match status" value="1"/>
</dbReference>
<dbReference type="SUPFAM" id="SSF89392">
    <property type="entry name" value="Prokaryotic lipoproteins and lipoprotein localization factors"/>
    <property type="match status" value="1"/>
</dbReference>
<dbReference type="PROSITE" id="PS51257">
    <property type="entry name" value="PROKAR_LIPOPROTEIN"/>
    <property type="match status" value="1"/>
</dbReference>
<keyword id="KW-0998">Cell outer membrane</keyword>
<keyword id="KW-0143">Chaperone</keyword>
<keyword id="KW-0449">Lipoprotein</keyword>
<keyword id="KW-0472">Membrane</keyword>
<keyword id="KW-0564">Palmitate</keyword>
<keyword id="KW-0653">Protein transport</keyword>
<keyword id="KW-0732">Signal</keyword>
<keyword id="KW-0813">Transport</keyword>
<comment type="function">
    <text evidence="1">Plays a critical role in the incorporation of lipoproteins in the outer membrane after they are released by the LolA protein.</text>
</comment>
<comment type="subunit">
    <text evidence="1">Monomer.</text>
</comment>
<comment type="subcellular location">
    <subcellularLocation>
        <location evidence="1">Cell outer membrane</location>
        <topology evidence="1">Lipid-anchor</topology>
    </subcellularLocation>
</comment>
<comment type="similarity">
    <text evidence="1">Belongs to the LolB family.</text>
</comment>
<accession>B7VKH1</accession>
<organism>
    <name type="scientific">Vibrio atlanticus (strain LGP32)</name>
    <name type="common">Vibrio splendidus (strain Mel32)</name>
    <dbReference type="NCBI Taxonomy" id="575788"/>
    <lineage>
        <taxon>Bacteria</taxon>
        <taxon>Pseudomonadati</taxon>
        <taxon>Pseudomonadota</taxon>
        <taxon>Gammaproteobacteria</taxon>
        <taxon>Vibrionales</taxon>
        <taxon>Vibrionaceae</taxon>
        <taxon>Vibrio</taxon>
    </lineage>
</organism>
<reference key="1">
    <citation type="submission" date="2009-02" db="EMBL/GenBank/DDBJ databases">
        <title>Vibrio splendidus str. LGP32 complete genome.</title>
        <authorList>
            <person name="Mazel D."/>
            <person name="Le Roux F."/>
        </authorList>
    </citation>
    <scope>NUCLEOTIDE SEQUENCE [LARGE SCALE GENOMIC DNA]</scope>
    <source>
        <strain>LGP32</strain>
    </source>
</reference>
<sequence>MSKLRKITSLIFLTIIMVGCSSIPEQPTSVEWQSHQNRLLQIENYQASGKLAYISPEQRQSLNFIWKHSPNQSQLRLTTFLGQTALNLTIDSLGAKVVTYDDQVFTHASASVLVEQLTGLQIPIDHLPQWFLGIPDQADSYQLNSTNTLESLSKQVSSQLWTLNFANYRNTEMQSKQLSDKDNVKVETIPLPTRLSFKQDENKINIVVSKWTLKK</sequence>
<name>LOLB_VIBA3</name>
<feature type="signal peptide" evidence="1">
    <location>
        <begin position="1"/>
        <end position="19"/>
    </location>
</feature>
<feature type="chain" id="PRO_1000204389" description="Outer-membrane lipoprotein LolB">
    <location>
        <begin position="20"/>
        <end position="215"/>
    </location>
</feature>
<feature type="lipid moiety-binding region" description="N-palmitoyl cysteine" evidence="1">
    <location>
        <position position="20"/>
    </location>
</feature>
<feature type="lipid moiety-binding region" description="S-diacylglycerol cysteine" evidence="1">
    <location>
        <position position="20"/>
    </location>
</feature>
<protein>
    <recommendedName>
        <fullName evidence="1">Outer-membrane lipoprotein LolB</fullName>
    </recommendedName>
</protein>